<proteinExistence type="inferred from homology"/>
<keyword id="KW-0963">Cytoplasm</keyword>
<keyword id="KW-1185">Reference proteome</keyword>
<sequence>MSIRIIPQDELGSSEKRTADMIPPLLFPRLKNLYNRRAERLRELAENNPLGDYLRFAALIAHAQEVVLYDHPLEMDLTARIKEASAQGKPPLDIHVLPRDKHWQKLLMALIAELKPEMSGPALAVIENLEKASTQELEDMASALFASDFSSVSSDKAPFIWAALSLYWAQMANLIPGKARAEYGEQRQYCPVCGSMPVSSMVQIGTTQGLRYLHCNLCETEWHVVRVKCSNCEQSGKLHYWSLDDEQAAIKAESCDDCGTYLKILYQEKEPKVEAVADDLASLVLDARMEQEGYARSSINPFLFPGEGE</sequence>
<gene>
    <name evidence="1" type="primary">fdhE</name>
    <name type="ordered locus">EcE24377A_4420</name>
</gene>
<comment type="function">
    <text evidence="1">Necessary for formate dehydrogenase activity.</text>
</comment>
<comment type="subcellular location">
    <subcellularLocation>
        <location evidence="1">Cytoplasm</location>
    </subcellularLocation>
</comment>
<comment type="similarity">
    <text evidence="1">Belongs to the FdhE family.</text>
</comment>
<organism>
    <name type="scientific">Escherichia coli O139:H28 (strain E24377A / ETEC)</name>
    <dbReference type="NCBI Taxonomy" id="331111"/>
    <lineage>
        <taxon>Bacteria</taxon>
        <taxon>Pseudomonadati</taxon>
        <taxon>Pseudomonadota</taxon>
        <taxon>Gammaproteobacteria</taxon>
        <taxon>Enterobacterales</taxon>
        <taxon>Enterobacteriaceae</taxon>
        <taxon>Escherichia</taxon>
    </lineage>
</organism>
<dbReference type="EMBL" id="CP000800">
    <property type="protein sequence ID" value="ABV19485.1"/>
    <property type="molecule type" value="Genomic_DNA"/>
</dbReference>
<dbReference type="RefSeq" id="WP_000027708.1">
    <property type="nucleotide sequence ID" value="NC_009801.1"/>
</dbReference>
<dbReference type="SMR" id="A7ZUA1"/>
<dbReference type="GeneID" id="93778047"/>
<dbReference type="KEGG" id="ecw:EcE24377A_4420"/>
<dbReference type="HOGENOM" id="CLU_055275_0_0_6"/>
<dbReference type="Proteomes" id="UP000001122">
    <property type="component" value="Chromosome"/>
</dbReference>
<dbReference type="GO" id="GO:0005829">
    <property type="term" value="C:cytosol"/>
    <property type="evidence" value="ECO:0007669"/>
    <property type="project" value="TreeGrafter"/>
</dbReference>
<dbReference type="GO" id="GO:0008199">
    <property type="term" value="F:ferric iron binding"/>
    <property type="evidence" value="ECO:0007669"/>
    <property type="project" value="TreeGrafter"/>
</dbReference>
<dbReference type="GO" id="GO:0051604">
    <property type="term" value="P:protein maturation"/>
    <property type="evidence" value="ECO:0007669"/>
    <property type="project" value="TreeGrafter"/>
</dbReference>
<dbReference type="CDD" id="cd16341">
    <property type="entry name" value="FdhE"/>
    <property type="match status" value="1"/>
</dbReference>
<dbReference type="FunFam" id="3.90.1670.10:FF:000001">
    <property type="entry name" value="Protein FdhE"/>
    <property type="match status" value="1"/>
</dbReference>
<dbReference type="Gene3D" id="3.90.1670.10">
    <property type="entry name" value="FdhE-like domain"/>
    <property type="match status" value="1"/>
</dbReference>
<dbReference type="HAMAP" id="MF_00611">
    <property type="entry name" value="FdeH"/>
    <property type="match status" value="1"/>
</dbReference>
<dbReference type="InterPro" id="IPR024064">
    <property type="entry name" value="FdhE-like_sf"/>
</dbReference>
<dbReference type="InterPro" id="IPR056796">
    <property type="entry name" value="FdhE_C"/>
</dbReference>
<dbReference type="InterPro" id="IPR056797">
    <property type="entry name" value="FdhE_central"/>
</dbReference>
<dbReference type="InterPro" id="IPR056774">
    <property type="entry name" value="FdhE_N"/>
</dbReference>
<dbReference type="InterPro" id="IPR006452">
    <property type="entry name" value="Formate_DH_accessory"/>
</dbReference>
<dbReference type="NCBIfam" id="TIGR01562">
    <property type="entry name" value="FdhE"/>
    <property type="match status" value="1"/>
</dbReference>
<dbReference type="NCBIfam" id="NF002925">
    <property type="entry name" value="PRK03564.1"/>
    <property type="match status" value="1"/>
</dbReference>
<dbReference type="PANTHER" id="PTHR37689">
    <property type="entry name" value="PROTEIN FDHE"/>
    <property type="match status" value="1"/>
</dbReference>
<dbReference type="PANTHER" id="PTHR37689:SF1">
    <property type="entry name" value="PROTEIN FDHE"/>
    <property type="match status" value="1"/>
</dbReference>
<dbReference type="Pfam" id="PF24860">
    <property type="entry name" value="FdhE_C"/>
    <property type="match status" value="1"/>
</dbReference>
<dbReference type="Pfam" id="PF24859">
    <property type="entry name" value="FdhE_central"/>
    <property type="match status" value="1"/>
</dbReference>
<dbReference type="Pfam" id="PF04216">
    <property type="entry name" value="FdhE_N"/>
    <property type="match status" value="1"/>
</dbReference>
<dbReference type="PIRSF" id="PIRSF018296">
    <property type="entry name" value="Format_dh_formtn"/>
    <property type="match status" value="1"/>
</dbReference>
<dbReference type="SUPFAM" id="SSF144020">
    <property type="entry name" value="FdhE-like"/>
    <property type="match status" value="1"/>
</dbReference>
<protein>
    <recommendedName>
        <fullName evidence="1">Protein FdhE</fullName>
    </recommendedName>
</protein>
<feature type="chain" id="PRO_1000061291" description="Protein FdhE">
    <location>
        <begin position="1"/>
        <end position="309"/>
    </location>
</feature>
<accession>A7ZUA1</accession>
<name>FDHE_ECO24</name>
<reference key="1">
    <citation type="journal article" date="2008" name="J. Bacteriol.">
        <title>The pangenome structure of Escherichia coli: comparative genomic analysis of E. coli commensal and pathogenic isolates.</title>
        <authorList>
            <person name="Rasko D.A."/>
            <person name="Rosovitz M.J."/>
            <person name="Myers G.S.A."/>
            <person name="Mongodin E.F."/>
            <person name="Fricke W.F."/>
            <person name="Gajer P."/>
            <person name="Crabtree J."/>
            <person name="Sebaihia M."/>
            <person name="Thomson N.R."/>
            <person name="Chaudhuri R."/>
            <person name="Henderson I.R."/>
            <person name="Sperandio V."/>
            <person name="Ravel J."/>
        </authorList>
    </citation>
    <scope>NUCLEOTIDE SEQUENCE [LARGE SCALE GENOMIC DNA]</scope>
    <source>
        <strain>E24377A / ETEC</strain>
    </source>
</reference>
<evidence type="ECO:0000255" key="1">
    <source>
        <dbReference type="HAMAP-Rule" id="MF_00611"/>
    </source>
</evidence>